<accession>B4T207</accession>
<comment type="similarity">
    <text evidence="1">Belongs to the UPF0319 family.</text>
</comment>
<evidence type="ECO:0000255" key="1">
    <source>
        <dbReference type="HAMAP-Rule" id="MF_00789"/>
    </source>
</evidence>
<name>YCCT_SALNS</name>
<dbReference type="EMBL" id="CP001113">
    <property type="protein sequence ID" value="ACF63513.1"/>
    <property type="molecule type" value="Genomic_DNA"/>
</dbReference>
<dbReference type="RefSeq" id="WP_000847732.1">
    <property type="nucleotide sequence ID" value="NZ_CCMR01000003.1"/>
</dbReference>
<dbReference type="KEGG" id="see:SNSL254_A1118"/>
<dbReference type="HOGENOM" id="CLU_073782_2_0_6"/>
<dbReference type="Proteomes" id="UP000008824">
    <property type="component" value="Chromosome"/>
</dbReference>
<dbReference type="HAMAP" id="MF_00789">
    <property type="entry name" value="UPF0319"/>
    <property type="match status" value="1"/>
</dbReference>
<dbReference type="InterPro" id="IPR018635">
    <property type="entry name" value="UPF0319"/>
</dbReference>
<dbReference type="NCBIfam" id="NF047712">
    <property type="entry name" value="CrliSynInhib"/>
    <property type="match status" value="1"/>
</dbReference>
<dbReference type="NCBIfam" id="NF002967">
    <property type="entry name" value="PRK03641.1"/>
    <property type="match status" value="1"/>
</dbReference>
<dbReference type="PANTHER" id="PTHR38108">
    <property type="entry name" value="UPF0319 PROTEIN YCCT"/>
    <property type="match status" value="1"/>
</dbReference>
<dbReference type="PANTHER" id="PTHR38108:SF1">
    <property type="entry name" value="UPF0319 PROTEIN YCCT"/>
    <property type="match status" value="1"/>
</dbReference>
<dbReference type="Pfam" id="PF09829">
    <property type="entry name" value="DUF2057"/>
    <property type="match status" value="1"/>
</dbReference>
<reference key="1">
    <citation type="journal article" date="2011" name="J. Bacteriol.">
        <title>Comparative genomics of 28 Salmonella enterica isolates: evidence for CRISPR-mediated adaptive sublineage evolution.</title>
        <authorList>
            <person name="Fricke W.F."/>
            <person name="Mammel M.K."/>
            <person name="McDermott P.F."/>
            <person name="Tartera C."/>
            <person name="White D.G."/>
            <person name="Leclerc J.E."/>
            <person name="Ravel J."/>
            <person name="Cebula T.A."/>
        </authorList>
    </citation>
    <scope>NUCLEOTIDE SEQUENCE [LARGE SCALE GENOMIC DNA]</scope>
    <source>
        <strain>SL254</strain>
    </source>
</reference>
<sequence>MKTGALTTFLALCLPVTVFATTLRLSNEVDLLVLDGKKVSSSLLRGAESIELENGPHQLVFRVEKTIRLPGNEERLYISPPLVISFDTQLISQVNFQLPRLENEREASHFNAAPRLALLDGDAMPIPVKLDILAITSTAKVVDYEIETERYNKSAKRASLPQFATMMADDSTLLSDVSELDTVPPQSQTLTEQRLKYWFRLADPQTRHHFLQWAEKQPPS</sequence>
<feature type="signal peptide" evidence="1">
    <location>
        <begin position="1"/>
        <end position="20"/>
    </location>
</feature>
<feature type="chain" id="PRO_1000200495" description="UPF0319 protein YccT">
    <location>
        <begin position="21"/>
        <end position="220"/>
    </location>
</feature>
<proteinExistence type="inferred from homology"/>
<protein>
    <recommendedName>
        <fullName evidence="1">UPF0319 protein YccT</fullName>
    </recommendedName>
</protein>
<organism>
    <name type="scientific">Salmonella newport (strain SL254)</name>
    <dbReference type="NCBI Taxonomy" id="423368"/>
    <lineage>
        <taxon>Bacteria</taxon>
        <taxon>Pseudomonadati</taxon>
        <taxon>Pseudomonadota</taxon>
        <taxon>Gammaproteobacteria</taxon>
        <taxon>Enterobacterales</taxon>
        <taxon>Enterobacteriaceae</taxon>
        <taxon>Salmonella</taxon>
    </lineage>
</organism>
<gene>
    <name evidence="1" type="primary">yccT</name>
    <name type="ordered locus">SNSL254_A1118</name>
</gene>
<keyword id="KW-0732">Signal</keyword>